<keyword id="KW-1185">Reference proteome</keyword>
<keyword id="KW-0687">Ribonucleoprotein</keyword>
<keyword id="KW-0689">Ribosomal protein</keyword>
<keyword id="KW-0694">RNA-binding</keyword>
<keyword id="KW-0699">rRNA-binding</keyword>
<feature type="chain" id="PRO_0000323294" description="Small ribosomal subunit protein uS3">
    <location>
        <begin position="1"/>
        <end position="239"/>
    </location>
</feature>
<feature type="domain" description="KH type-2" evidence="1">
    <location>
        <begin position="39"/>
        <end position="107"/>
    </location>
</feature>
<feature type="region of interest" description="Disordered" evidence="2">
    <location>
        <begin position="215"/>
        <end position="239"/>
    </location>
</feature>
<feature type="compositionally biased region" description="Basic residues" evidence="2">
    <location>
        <begin position="227"/>
        <end position="239"/>
    </location>
</feature>
<sequence>MGQKIHPIGFRLGVSKDWTSKWYAEGTDYANYLEKDFEVREFLRKKLAHASVSKIQIERPRNGAQITIFTARPGIVIGKKGEDIEILKKEVGKILGVATSINIEEIRRPELDSYLVADNIAKQLERRVMFRRAMKRAVASTMRLGAVGVKVSISGRLNGAEIARTEWYREGRVPLHTLRADIDYGLAEAYTTYGVIGVKVWIFKGENLEGLEADTSNTNELSDEKRNRRKPRNANRRKE</sequence>
<accession>A5EX93</accession>
<name>RS3_DICNV</name>
<comment type="function">
    <text evidence="1">Binds the lower part of the 30S subunit head. Binds mRNA in the 70S ribosome, positioning it for translation.</text>
</comment>
<comment type="subunit">
    <text evidence="1">Part of the 30S ribosomal subunit. Forms a tight complex with proteins S10 and S14.</text>
</comment>
<comment type="similarity">
    <text evidence="1">Belongs to the universal ribosomal protein uS3 family.</text>
</comment>
<evidence type="ECO:0000255" key="1">
    <source>
        <dbReference type="HAMAP-Rule" id="MF_01309"/>
    </source>
</evidence>
<evidence type="ECO:0000256" key="2">
    <source>
        <dbReference type="SAM" id="MobiDB-lite"/>
    </source>
</evidence>
<evidence type="ECO:0000305" key="3"/>
<organism>
    <name type="scientific">Dichelobacter nodosus (strain VCS1703A)</name>
    <dbReference type="NCBI Taxonomy" id="246195"/>
    <lineage>
        <taxon>Bacteria</taxon>
        <taxon>Pseudomonadati</taxon>
        <taxon>Pseudomonadota</taxon>
        <taxon>Gammaproteobacteria</taxon>
        <taxon>Cardiobacteriales</taxon>
        <taxon>Cardiobacteriaceae</taxon>
        <taxon>Dichelobacter</taxon>
    </lineage>
</organism>
<protein>
    <recommendedName>
        <fullName evidence="1">Small ribosomal subunit protein uS3</fullName>
    </recommendedName>
    <alternativeName>
        <fullName evidence="3">30S ribosomal protein S3</fullName>
    </alternativeName>
</protein>
<proteinExistence type="inferred from homology"/>
<dbReference type="EMBL" id="CP000513">
    <property type="protein sequence ID" value="ABQ13232.1"/>
    <property type="molecule type" value="Genomic_DNA"/>
</dbReference>
<dbReference type="RefSeq" id="WP_012031564.1">
    <property type="nucleotide sequence ID" value="NC_009446.1"/>
</dbReference>
<dbReference type="SMR" id="A5EX93"/>
<dbReference type="STRING" id="246195.DNO_1269"/>
<dbReference type="KEGG" id="dno:DNO_1269"/>
<dbReference type="eggNOG" id="COG0092">
    <property type="taxonomic scope" value="Bacteria"/>
</dbReference>
<dbReference type="HOGENOM" id="CLU_058591_0_2_6"/>
<dbReference type="OrthoDB" id="9806396at2"/>
<dbReference type="Proteomes" id="UP000000248">
    <property type="component" value="Chromosome"/>
</dbReference>
<dbReference type="GO" id="GO:0022627">
    <property type="term" value="C:cytosolic small ribosomal subunit"/>
    <property type="evidence" value="ECO:0007669"/>
    <property type="project" value="TreeGrafter"/>
</dbReference>
<dbReference type="GO" id="GO:0003729">
    <property type="term" value="F:mRNA binding"/>
    <property type="evidence" value="ECO:0007669"/>
    <property type="project" value="UniProtKB-UniRule"/>
</dbReference>
<dbReference type="GO" id="GO:0019843">
    <property type="term" value="F:rRNA binding"/>
    <property type="evidence" value="ECO:0007669"/>
    <property type="project" value="UniProtKB-UniRule"/>
</dbReference>
<dbReference type="GO" id="GO:0003735">
    <property type="term" value="F:structural constituent of ribosome"/>
    <property type="evidence" value="ECO:0007669"/>
    <property type="project" value="InterPro"/>
</dbReference>
<dbReference type="GO" id="GO:0006412">
    <property type="term" value="P:translation"/>
    <property type="evidence" value="ECO:0007669"/>
    <property type="project" value="UniProtKB-UniRule"/>
</dbReference>
<dbReference type="CDD" id="cd02412">
    <property type="entry name" value="KH-II_30S_S3"/>
    <property type="match status" value="1"/>
</dbReference>
<dbReference type="FunFam" id="3.30.1140.32:FF:000001">
    <property type="entry name" value="30S ribosomal protein S3"/>
    <property type="match status" value="1"/>
</dbReference>
<dbReference type="FunFam" id="3.30.300.20:FF:000001">
    <property type="entry name" value="30S ribosomal protein S3"/>
    <property type="match status" value="1"/>
</dbReference>
<dbReference type="Gene3D" id="3.30.300.20">
    <property type="match status" value="1"/>
</dbReference>
<dbReference type="Gene3D" id="3.30.1140.32">
    <property type="entry name" value="Ribosomal protein S3, C-terminal domain"/>
    <property type="match status" value="1"/>
</dbReference>
<dbReference type="HAMAP" id="MF_01309_B">
    <property type="entry name" value="Ribosomal_uS3_B"/>
    <property type="match status" value="1"/>
</dbReference>
<dbReference type="InterPro" id="IPR004087">
    <property type="entry name" value="KH_dom"/>
</dbReference>
<dbReference type="InterPro" id="IPR015946">
    <property type="entry name" value="KH_dom-like_a/b"/>
</dbReference>
<dbReference type="InterPro" id="IPR004044">
    <property type="entry name" value="KH_dom_type_2"/>
</dbReference>
<dbReference type="InterPro" id="IPR009019">
    <property type="entry name" value="KH_sf_prok-type"/>
</dbReference>
<dbReference type="InterPro" id="IPR036419">
    <property type="entry name" value="Ribosomal_S3_C_sf"/>
</dbReference>
<dbReference type="InterPro" id="IPR005704">
    <property type="entry name" value="Ribosomal_uS3_bac-typ"/>
</dbReference>
<dbReference type="InterPro" id="IPR001351">
    <property type="entry name" value="Ribosomal_uS3_C"/>
</dbReference>
<dbReference type="InterPro" id="IPR018280">
    <property type="entry name" value="Ribosomal_uS3_CS"/>
</dbReference>
<dbReference type="NCBIfam" id="TIGR01009">
    <property type="entry name" value="rpsC_bact"/>
    <property type="match status" value="1"/>
</dbReference>
<dbReference type="PANTHER" id="PTHR11760">
    <property type="entry name" value="30S/40S RIBOSOMAL PROTEIN S3"/>
    <property type="match status" value="1"/>
</dbReference>
<dbReference type="PANTHER" id="PTHR11760:SF19">
    <property type="entry name" value="SMALL RIBOSOMAL SUBUNIT PROTEIN US3C"/>
    <property type="match status" value="1"/>
</dbReference>
<dbReference type="Pfam" id="PF07650">
    <property type="entry name" value="KH_2"/>
    <property type="match status" value="1"/>
</dbReference>
<dbReference type="Pfam" id="PF00189">
    <property type="entry name" value="Ribosomal_S3_C"/>
    <property type="match status" value="1"/>
</dbReference>
<dbReference type="SMART" id="SM00322">
    <property type="entry name" value="KH"/>
    <property type="match status" value="1"/>
</dbReference>
<dbReference type="SUPFAM" id="SSF54814">
    <property type="entry name" value="Prokaryotic type KH domain (KH-domain type II)"/>
    <property type="match status" value="1"/>
</dbReference>
<dbReference type="SUPFAM" id="SSF54821">
    <property type="entry name" value="Ribosomal protein S3 C-terminal domain"/>
    <property type="match status" value="1"/>
</dbReference>
<dbReference type="PROSITE" id="PS50823">
    <property type="entry name" value="KH_TYPE_2"/>
    <property type="match status" value="1"/>
</dbReference>
<dbReference type="PROSITE" id="PS00548">
    <property type="entry name" value="RIBOSOMAL_S3"/>
    <property type="match status" value="1"/>
</dbReference>
<reference key="1">
    <citation type="journal article" date="2007" name="Nat. Biotechnol.">
        <title>Genome sequence and identification of candidate vaccine antigens from the animal pathogen Dichelobacter nodosus.</title>
        <authorList>
            <person name="Myers G.S.A."/>
            <person name="Parker D."/>
            <person name="Al-Hasani K."/>
            <person name="Kennan R.M."/>
            <person name="Seemann T."/>
            <person name="Ren Q."/>
            <person name="Badger J.H."/>
            <person name="Selengut J.D."/>
            <person name="Deboy R.T."/>
            <person name="Tettelin H."/>
            <person name="Boyce J.D."/>
            <person name="McCarl V.P."/>
            <person name="Han X."/>
            <person name="Nelson W.C."/>
            <person name="Madupu R."/>
            <person name="Mohamoud Y."/>
            <person name="Holley T."/>
            <person name="Fedorova N."/>
            <person name="Khouri H."/>
            <person name="Bottomley S.P."/>
            <person name="Whittington R.J."/>
            <person name="Adler B."/>
            <person name="Songer J.G."/>
            <person name="Rood J.I."/>
            <person name="Paulsen I.T."/>
        </authorList>
    </citation>
    <scope>NUCLEOTIDE SEQUENCE [LARGE SCALE GENOMIC DNA]</scope>
    <source>
        <strain>VCS1703A</strain>
    </source>
</reference>
<gene>
    <name evidence="1" type="primary">rpsC</name>
    <name type="ordered locus">DNO_1269</name>
</gene>